<keyword id="KW-0238">DNA-binding</keyword>
<keyword id="KW-1017">Isopeptide bond</keyword>
<keyword id="KW-0479">Metal-binding</keyword>
<keyword id="KW-0539">Nucleus</keyword>
<keyword id="KW-1185">Reference proteome</keyword>
<keyword id="KW-0677">Repeat</keyword>
<keyword id="KW-0678">Repressor</keyword>
<keyword id="KW-0804">Transcription</keyword>
<keyword id="KW-0805">Transcription regulation</keyword>
<keyword id="KW-0832">Ubl conjugation</keyword>
<keyword id="KW-0862">Zinc</keyword>
<keyword id="KW-0863">Zinc-finger</keyword>
<evidence type="ECO:0000250" key="1"/>
<evidence type="ECO:0000250" key="2">
    <source>
        <dbReference type="UniProtKB" id="O95600"/>
    </source>
</evidence>
<evidence type="ECO:0000255" key="3">
    <source>
        <dbReference type="PROSITE-ProRule" id="PRU00042"/>
    </source>
</evidence>
<evidence type="ECO:0000256" key="4">
    <source>
        <dbReference type="SAM" id="MobiDB-lite"/>
    </source>
</evidence>
<evidence type="ECO:0000305" key="5"/>
<name>KLF8_MOUSE</name>
<protein>
    <recommendedName>
        <fullName>Krueppel-like factor 8</fullName>
    </recommendedName>
</protein>
<proteinExistence type="evidence at transcript level"/>
<sequence length="355" mass="38845">MDKFIDNMDVRIKSESGSMQVFKQVTGPVPTRDPSARADRRNMTSPSFLAASPMENPALFNDIKIEPPEELLESDFNMPQVEPVDLSFHKPKAPLQPASMLQAPIRPPKPPTAPQAIMVPTSADTVTSAAIPTVLTPGSILASSQGTGGQPILHVIHTIPSVSLPNKMSGLKTIPLVVQSLPMVYTSLPTDGSPAAITVPLIGGDGKSAGSVKVDPASMCPLEFPSDSDESAIESGSSALQSLQGFHHEPATMVHMQGEESLDLKRRRIHQCDFAGCSKVYTKSSHLKAHRRIHTGEKPYKCTWDGCSWKFARSDELTRHFRKHTGIKPFRCTDCNRSFSRSDHLSLHRRRHDTM</sequence>
<feature type="chain" id="PRO_0000294168" description="Krueppel-like factor 8">
    <location>
        <begin position="1"/>
        <end position="355"/>
    </location>
</feature>
<feature type="zinc finger region" description="C2H2-type 1" evidence="3">
    <location>
        <begin position="270"/>
        <end position="294"/>
    </location>
</feature>
<feature type="zinc finger region" description="C2H2-type 2" evidence="3">
    <location>
        <begin position="300"/>
        <end position="324"/>
    </location>
</feature>
<feature type="zinc finger region" description="C2H2-type 3" evidence="3">
    <location>
        <begin position="330"/>
        <end position="352"/>
    </location>
</feature>
<feature type="region of interest" description="Disordered" evidence="4">
    <location>
        <begin position="19"/>
        <end position="52"/>
    </location>
</feature>
<feature type="short sequence motif" description="9aaTAD; inactive" evidence="2">
    <location>
        <begin position="82"/>
        <end position="90"/>
    </location>
</feature>
<feature type="cross-link" description="Glycyl lysine isopeptide (Lys-Gly) (interchain with G-Cter in SUMO)" evidence="1">
    <location>
        <position position="64"/>
    </location>
</feature>
<accession>Q8BLM0</accession>
<reference key="1">
    <citation type="journal article" date="2005" name="Science">
        <title>The transcriptional landscape of the mammalian genome.</title>
        <authorList>
            <person name="Carninci P."/>
            <person name="Kasukawa T."/>
            <person name="Katayama S."/>
            <person name="Gough J."/>
            <person name="Frith M.C."/>
            <person name="Maeda N."/>
            <person name="Oyama R."/>
            <person name="Ravasi T."/>
            <person name="Lenhard B."/>
            <person name="Wells C."/>
            <person name="Kodzius R."/>
            <person name="Shimokawa K."/>
            <person name="Bajic V.B."/>
            <person name="Brenner S.E."/>
            <person name="Batalov S."/>
            <person name="Forrest A.R."/>
            <person name="Zavolan M."/>
            <person name="Davis M.J."/>
            <person name="Wilming L.G."/>
            <person name="Aidinis V."/>
            <person name="Allen J.E."/>
            <person name="Ambesi-Impiombato A."/>
            <person name="Apweiler R."/>
            <person name="Aturaliya R.N."/>
            <person name="Bailey T.L."/>
            <person name="Bansal M."/>
            <person name="Baxter L."/>
            <person name="Beisel K.W."/>
            <person name="Bersano T."/>
            <person name="Bono H."/>
            <person name="Chalk A.M."/>
            <person name="Chiu K.P."/>
            <person name="Choudhary V."/>
            <person name="Christoffels A."/>
            <person name="Clutterbuck D.R."/>
            <person name="Crowe M.L."/>
            <person name="Dalla E."/>
            <person name="Dalrymple B.P."/>
            <person name="de Bono B."/>
            <person name="Della Gatta G."/>
            <person name="di Bernardo D."/>
            <person name="Down T."/>
            <person name="Engstrom P."/>
            <person name="Fagiolini M."/>
            <person name="Faulkner G."/>
            <person name="Fletcher C.F."/>
            <person name="Fukushima T."/>
            <person name="Furuno M."/>
            <person name="Futaki S."/>
            <person name="Gariboldi M."/>
            <person name="Georgii-Hemming P."/>
            <person name="Gingeras T.R."/>
            <person name="Gojobori T."/>
            <person name="Green R.E."/>
            <person name="Gustincich S."/>
            <person name="Harbers M."/>
            <person name="Hayashi Y."/>
            <person name="Hensch T.K."/>
            <person name="Hirokawa N."/>
            <person name="Hill D."/>
            <person name="Huminiecki L."/>
            <person name="Iacono M."/>
            <person name="Ikeo K."/>
            <person name="Iwama A."/>
            <person name="Ishikawa T."/>
            <person name="Jakt M."/>
            <person name="Kanapin A."/>
            <person name="Katoh M."/>
            <person name="Kawasawa Y."/>
            <person name="Kelso J."/>
            <person name="Kitamura H."/>
            <person name="Kitano H."/>
            <person name="Kollias G."/>
            <person name="Krishnan S.P."/>
            <person name="Kruger A."/>
            <person name="Kummerfeld S.K."/>
            <person name="Kurochkin I.V."/>
            <person name="Lareau L.F."/>
            <person name="Lazarevic D."/>
            <person name="Lipovich L."/>
            <person name="Liu J."/>
            <person name="Liuni S."/>
            <person name="McWilliam S."/>
            <person name="Madan Babu M."/>
            <person name="Madera M."/>
            <person name="Marchionni L."/>
            <person name="Matsuda H."/>
            <person name="Matsuzawa S."/>
            <person name="Miki H."/>
            <person name="Mignone F."/>
            <person name="Miyake S."/>
            <person name="Morris K."/>
            <person name="Mottagui-Tabar S."/>
            <person name="Mulder N."/>
            <person name="Nakano N."/>
            <person name="Nakauchi H."/>
            <person name="Ng P."/>
            <person name="Nilsson R."/>
            <person name="Nishiguchi S."/>
            <person name="Nishikawa S."/>
            <person name="Nori F."/>
            <person name="Ohara O."/>
            <person name="Okazaki Y."/>
            <person name="Orlando V."/>
            <person name="Pang K.C."/>
            <person name="Pavan W.J."/>
            <person name="Pavesi G."/>
            <person name="Pesole G."/>
            <person name="Petrovsky N."/>
            <person name="Piazza S."/>
            <person name="Reed J."/>
            <person name="Reid J.F."/>
            <person name="Ring B.Z."/>
            <person name="Ringwald M."/>
            <person name="Rost B."/>
            <person name="Ruan Y."/>
            <person name="Salzberg S.L."/>
            <person name="Sandelin A."/>
            <person name="Schneider C."/>
            <person name="Schoenbach C."/>
            <person name="Sekiguchi K."/>
            <person name="Semple C.A."/>
            <person name="Seno S."/>
            <person name="Sessa L."/>
            <person name="Sheng Y."/>
            <person name="Shibata Y."/>
            <person name="Shimada H."/>
            <person name="Shimada K."/>
            <person name="Silva D."/>
            <person name="Sinclair B."/>
            <person name="Sperling S."/>
            <person name="Stupka E."/>
            <person name="Sugiura K."/>
            <person name="Sultana R."/>
            <person name="Takenaka Y."/>
            <person name="Taki K."/>
            <person name="Tammoja K."/>
            <person name="Tan S.L."/>
            <person name="Tang S."/>
            <person name="Taylor M.S."/>
            <person name="Tegner J."/>
            <person name="Teichmann S.A."/>
            <person name="Ueda H.R."/>
            <person name="van Nimwegen E."/>
            <person name="Verardo R."/>
            <person name="Wei C.L."/>
            <person name="Yagi K."/>
            <person name="Yamanishi H."/>
            <person name="Zabarovsky E."/>
            <person name="Zhu S."/>
            <person name="Zimmer A."/>
            <person name="Hide W."/>
            <person name="Bult C."/>
            <person name="Grimmond S.M."/>
            <person name="Teasdale R.D."/>
            <person name="Liu E.T."/>
            <person name="Brusic V."/>
            <person name="Quackenbush J."/>
            <person name="Wahlestedt C."/>
            <person name="Mattick J.S."/>
            <person name="Hume D.A."/>
            <person name="Kai C."/>
            <person name="Sasaki D."/>
            <person name="Tomaru Y."/>
            <person name="Fukuda S."/>
            <person name="Kanamori-Katayama M."/>
            <person name="Suzuki M."/>
            <person name="Aoki J."/>
            <person name="Arakawa T."/>
            <person name="Iida J."/>
            <person name="Imamura K."/>
            <person name="Itoh M."/>
            <person name="Kato T."/>
            <person name="Kawaji H."/>
            <person name="Kawagashira N."/>
            <person name="Kawashima T."/>
            <person name="Kojima M."/>
            <person name="Kondo S."/>
            <person name="Konno H."/>
            <person name="Nakano K."/>
            <person name="Ninomiya N."/>
            <person name="Nishio T."/>
            <person name="Okada M."/>
            <person name="Plessy C."/>
            <person name="Shibata K."/>
            <person name="Shiraki T."/>
            <person name="Suzuki S."/>
            <person name="Tagami M."/>
            <person name="Waki K."/>
            <person name="Watahiki A."/>
            <person name="Okamura-Oho Y."/>
            <person name="Suzuki H."/>
            <person name="Kawai J."/>
            <person name="Hayashizaki Y."/>
        </authorList>
    </citation>
    <scope>NUCLEOTIDE SEQUENCE [LARGE SCALE MRNA]</scope>
    <source>
        <strain>C57BL/6J</strain>
        <tissue>Brain cortex</tissue>
    </source>
</reference>
<reference key="2">
    <citation type="journal article" date="2004" name="Genome Res.">
        <title>The status, quality, and expansion of the NIH full-length cDNA project: the Mammalian Gene Collection (MGC).</title>
        <authorList>
            <consortium name="The MGC Project Team"/>
        </authorList>
    </citation>
    <scope>NUCLEOTIDE SEQUENCE [LARGE SCALE MRNA]</scope>
    <source>
        <strain>C57BL/6J</strain>
        <tissue>Brain</tissue>
    </source>
</reference>
<gene>
    <name type="primary">Klf8</name>
</gene>
<dbReference type="EMBL" id="AK044185">
    <property type="protein sequence ID" value="BAC31807.1"/>
    <property type="molecule type" value="mRNA"/>
</dbReference>
<dbReference type="EMBL" id="BC070442">
    <property type="protein sequence ID" value="AAH70442.1"/>
    <property type="molecule type" value="mRNA"/>
</dbReference>
<dbReference type="CCDS" id="CCDS30481.1"/>
<dbReference type="RefSeq" id="NP_001344112.1">
    <property type="nucleotide sequence ID" value="NM_001357183.2"/>
</dbReference>
<dbReference type="RefSeq" id="NP_776141.1">
    <property type="nucleotide sequence ID" value="NM_173780.6"/>
</dbReference>
<dbReference type="RefSeq" id="XP_006528916.1">
    <property type="nucleotide sequence ID" value="XM_006528853.3"/>
</dbReference>
<dbReference type="RefSeq" id="XP_006528921.1">
    <property type="nucleotide sequence ID" value="XM_006528858.3"/>
</dbReference>
<dbReference type="RefSeq" id="XP_006528922.1">
    <property type="nucleotide sequence ID" value="XM_006528859.4"/>
</dbReference>
<dbReference type="RefSeq" id="XP_006528923.1">
    <property type="nucleotide sequence ID" value="XM_006528860.3"/>
</dbReference>
<dbReference type="RefSeq" id="XP_011246123.1">
    <property type="nucleotide sequence ID" value="XM_011247821.4"/>
</dbReference>
<dbReference type="RefSeq" id="XP_017173992.1">
    <property type="nucleotide sequence ID" value="XM_017318503.1"/>
</dbReference>
<dbReference type="RefSeq" id="XP_017173993.1">
    <property type="nucleotide sequence ID" value="XM_017318504.1"/>
</dbReference>
<dbReference type="RefSeq" id="XP_017173994.1">
    <property type="nucleotide sequence ID" value="XM_017318505.3"/>
</dbReference>
<dbReference type="RefSeq" id="XP_017173995.1">
    <property type="nucleotide sequence ID" value="XM_017318506.2"/>
</dbReference>
<dbReference type="RefSeq" id="XP_030107210.1">
    <property type="nucleotide sequence ID" value="XM_030251350.2"/>
</dbReference>
<dbReference type="RefSeq" id="XP_030107211.1">
    <property type="nucleotide sequence ID" value="XM_030251351.1"/>
</dbReference>
<dbReference type="RefSeq" id="XP_036017863.1">
    <property type="nucleotide sequence ID" value="XM_036161970.1"/>
</dbReference>
<dbReference type="SMR" id="Q8BLM0"/>
<dbReference type="FunCoup" id="Q8BLM0">
    <property type="interactions" value="461"/>
</dbReference>
<dbReference type="STRING" id="10090.ENSMUSP00000108193"/>
<dbReference type="iPTMnet" id="Q8BLM0"/>
<dbReference type="PhosphoSitePlus" id="Q8BLM0"/>
<dbReference type="PaxDb" id="10090-ENSMUSP00000108193"/>
<dbReference type="PeptideAtlas" id="Q8BLM0"/>
<dbReference type="ProteomicsDB" id="264998"/>
<dbReference type="Antibodypedia" id="13002">
    <property type="antibodies" value="220 antibodies from 31 providers"/>
</dbReference>
<dbReference type="DNASU" id="245671"/>
<dbReference type="Ensembl" id="ENSMUST00000039545.5">
    <property type="protein sequence ID" value="ENSMUSP00000044317.5"/>
    <property type="gene ID" value="ENSMUSG00000041649.14"/>
</dbReference>
<dbReference type="Ensembl" id="ENSMUST00000112574.9">
    <property type="protein sequence ID" value="ENSMUSP00000108193.3"/>
    <property type="gene ID" value="ENSMUSG00000041649.14"/>
</dbReference>
<dbReference type="GeneID" id="245671"/>
<dbReference type="KEGG" id="mmu:245671"/>
<dbReference type="UCSC" id="uc009uqu.1">
    <property type="organism name" value="mouse"/>
</dbReference>
<dbReference type="AGR" id="MGI:2442430"/>
<dbReference type="CTD" id="11279"/>
<dbReference type="MGI" id="MGI:2442430">
    <property type="gene designation" value="Klf8"/>
</dbReference>
<dbReference type="VEuPathDB" id="HostDB:ENSMUSG00000041649"/>
<dbReference type="eggNOG" id="KOG1721">
    <property type="taxonomic scope" value="Eukaryota"/>
</dbReference>
<dbReference type="GeneTree" id="ENSGT00940000161062"/>
<dbReference type="HOGENOM" id="CLU_002678_33_0_1"/>
<dbReference type="InParanoid" id="Q8BLM0"/>
<dbReference type="OMA" id="KMTSPPF"/>
<dbReference type="OrthoDB" id="4748970at2759"/>
<dbReference type="PhylomeDB" id="Q8BLM0"/>
<dbReference type="TreeFam" id="TF350556"/>
<dbReference type="BioGRID-ORCS" id="245671">
    <property type="hits" value="1 hit in 77 CRISPR screens"/>
</dbReference>
<dbReference type="ChiTaRS" id="Klf8">
    <property type="organism name" value="mouse"/>
</dbReference>
<dbReference type="PRO" id="PR:Q8BLM0"/>
<dbReference type="Proteomes" id="UP000000589">
    <property type="component" value="Chromosome X"/>
</dbReference>
<dbReference type="RNAct" id="Q8BLM0">
    <property type="molecule type" value="protein"/>
</dbReference>
<dbReference type="Bgee" id="ENSMUSG00000041649">
    <property type="expression patterns" value="Expressed in embryonic brain and 63 other cell types or tissues"/>
</dbReference>
<dbReference type="ExpressionAtlas" id="Q8BLM0">
    <property type="expression patterns" value="baseline and differential"/>
</dbReference>
<dbReference type="GO" id="GO:0016235">
    <property type="term" value="C:aggresome"/>
    <property type="evidence" value="ECO:0007669"/>
    <property type="project" value="Ensembl"/>
</dbReference>
<dbReference type="GO" id="GO:0005829">
    <property type="term" value="C:cytosol"/>
    <property type="evidence" value="ECO:0007669"/>
    <property type="project" value="Ensembl"/>
</dbReference>
<dbReference type="GO" id="GO:0005654">
    <property type="term" value="C:nucleoplasm"/>
    <property type="evidence" value="ECO:0007669"/>
    <property type="project" value="Ensembl"/>
</dbReference>
<dbReference type="GO" id="GO:0003677">
    <property type="term" value="F:DNA binding"/>
    <property type="evidence" value="ECO:0000250"/>
    <property type="project" value="MGI"/>
</dbReference>
<dbReference type="GO" id="GO:0001227">
    <property type="term" value="F:DNA-binding transcription repressor activity, RNA polymerase II-specific"/>
    <property type="evidence" value="ECO:0007669"/>
    <property type="project" value="Ensembl"/>
</dbReference>
<dbReference type="GO" id="GO:0000978">
    <property type="term" value="F:RNA polymerase II cis-regulatory region sequence-specific DNA binding"/>
    <property type="evidence" value="ECO:0007669"/>
    <property type="project" value="Ensembl"/>
</dbReference>
<dbReference type="GO" id="GO:0008270">
    <property type="term" value="F:zinc ion binding"/>
    <property type="evidence" value="ECO:0007669"/>
    <property type="project" value="UniProtKB-KW"/>
</dbReference>
<dbReference type="CDD" id="cd21440">
    <property type="entry name" value="KLF8_N"/>
    <property type="match status" value="1"/>
</dbReference>
<dbReference type="FunFam" id="3.30.160.60:FF:000021">
    <property type="entry name" value="Basic krueppel-like factor 3"/>
    <property type="match status" value="1"/>
</dbReference>
<dbReference type="FunFam" id="3.30.160.60:FF:000018">
    <property type="entry name" value="Krueppel-like factor 15"/>
    <property type="match status" value="1"/>
</dbReference>
<dbReference type="FunFam" id="3.30.160.60:FF:000563">
    <property type="entry name" value="Krueppel-like factor 8"/>
    <property type="match status" value="1"/>
</dbReference>
<dbReference type="Gene3D" id="3.30.160.60">
    <property type="entry name" value="Classic Zinc Finger"/>
    <property type="match status" value="3"/>
</dbReference>
<dbReference type="InterPro" id="IPR036236">
    <property type="entry name" value="Znf_C2H2_sf"/>
</dbReference>
<dbReference type="InterPro" id="IPR013087">
    <property type="entry name" value="Znf_C2H2_type"/>
</dbReference>
<dbReference type="PANTHER" id="PTHR23235:SF46">
    <property type="entry name" value="KRUEPPEL-LIKE FACTOR 8"/>
    <property type="match status" value="1"/>
</dbReference>
<dbReference type="PANTHER" id="PTHR23235">
    <property type="entry name" value="KRUEPPEL-LIKE TRANSCRIPTION FACTOR"/>
    <property type="match status" value="1"/>
</dbReference>
<dbReference type="Pfam" id="PF00096">
    <property type="entry name" value="zf-C2H2"/>
    <property type="match status" value="3"/>
</dbReference>
<dbReference type="SMART" id="SM00355">
    <property type="entry name" value="ZnF_C2H2"/>
    <property type="match status" value="3"/>
</dbReference>
<dbReference type="SUPFAM" id="SSF57667">
    <property type="entry name" value="beta-beta-alpha zinc fingers"/>
    <property type="match status" value="2"/>
</dbReference>
<dbReference type="PROSITE" id="PS00028">
    <property type="entry name" value="ZINC_FINGER_C2H2_1"/>
    <property type="match status" value="3"/>
</dbReference>
<dbReference type="PROSITE" id="PS50157">
    <property type="entry name" value="ZINC_FINGER_C2H2_2"/>
    <property type="match status" value="3"/>
</dbReference>
<organism>
    <name type="scientific">Mus musculus</name>
    <name type="common">Mouse</name>
    <dbReference type="NCBI Taxonomy" id="10090"/>
    <lineage>
        <taxon>Eukaryota</taxon>
        <taxon>Metazoa</taxon>
        <taxon>Chordata</taxon>
        <taxon>Craniata</taxon>
        <taxon>Vertebrata</taxon>
        <taxon>Euteleostomi</taxon>
        <taxon>Mammalia</taxon>
        <taxon>Eutheria</taxon>
        <taxon>Euarchontoglires</taxon>
        <taxon>Glires</taxon>
        <taxon>Rodentia</taxon>
        <taxon>Myomorpha</taxon>
        <taxon>Muroidea</taxon>
        <taxon>Muridae</taxon>
        <taxon>Murinae</taxon>
        <taxon>Mus</taxon>
        <taxon>Mus</taxon>
    </lineage>
</organism>
<comment type="function">
    <text evidence="1">Transcriptional repressor and activator. Binds to CACCC-boxes promoter elements. Also binds the GT-box of cyclin D1 promoter and mediates cell cycle progression at G(1) phase as a downstream target of focal adhesion kinase (FAK) (By similarity).</text>
</comment>
<comment type="subunit">
    <text evidence="1">Interacts with corepressor CtBP2. Interacts with PIAS1, PIAS2, and PIAS4; the interaction with each ligase sumoylates KLF8 (By similarity).</text>
</comment>
<comment type="subcellular location">
    <subcellularLocation>
        <location evidence="1">Nucleus</location>
    </subcellularLocation>
</comment>
<comment type="domain">
    <text evidence="2">The 9aaTAD motif is a transactivation domain present in a large number of yeast and animal transcription factors. In KLF8, the motif is inactive.</text>
</comment>
<comment type="PTM">
    <text>Sumoylation at Lys-64 represses transcriptional activity and reduces cell cycle progression into the G(1) phase. Has no effect on subcellular location.</text>
</comment>
<comment type="similarity">
    <text evidence="5">Belongs to the Sp1 C2H2-type zinc-finger protein family.</text>
</comment>